<organismHost>
    <name type="scientific">Salmonella typhi</name>
    <dbReference type="NCBI Taxonomy" id="90370"/>
</organismHost>
<organism evidence="5">
    <name type="scientific">Salmonella phage ViI</name>
    <dbReference type="NCBI Taxonomy" id="1987993"/>
    <lineage>
        <taxon>Viruses</taxon>
        <taxon>Duplodnaviria</taxon>
        <taxon>Heunggongvirae</taxon>
        <taxon>Uroviricota</taxon>
        <taxon>Caudoviricetes</taxon>
        <taxon>Ackermannviridae</taxon>
        <taxon>Cvivirinae</taxon>
        <taxon>Kuttervirus</taxon>
    </lineage>
</organism>
<protein>
    <recommendedName>
        <fullName evidence="1">Portal protein</fullName>
    </recommendedName>
    <alternativeName>
        <fullName evidence="1">gp20</fullName>
    </alternativeName>
</protein>
<reference key="1">
    <citation type="journal article" date="2010" name="J. Bacteriol.">
        <title>A conserved acetyl esterase domain targets diverse bacteriophages to the Vi capsular receptor of Salmonella enterica serovar Typhi.</title>
        <authorList>
            <person name="Pickard D."/>
            <person name="Toribio A.L."/>
            <person name="Petty N.K."/>
            <person name="van Tonder A."/>
            <person name="Yu L."/>
            <person name="Goulding D."/>
            <person name="Barrell B."/>
            <person name="Rance R."/>
            <person name="Harris D."/>
            <person name="Wetter M."/>
            <person name="Wain J."/>
            <person name="Choudhary J."/>
            <person name="Thomson N."/>
            <person name="Dougan G."/>
        </authorList>
    </citation>
    <scope>NUCLEOTIDE SEQUENCE [LARGE SCALE GENOMIC DNA]</scope>
</reference>
<feature type="chain" id="PRO_0000432534" description="Portal protein">
    <location>
        <begin position="1"/>
        <end position="560"/>
    </location>
</feature>
<feature type="region of interest" description="Disordered" evidence="2">
    <location>
        <begin position="526"/>
        <end position="560"/>
    </location>
</feature>
<proteinExistence type="inferred from homology"/>
<gene>
    <name evidence="4" type="ORF">Vi01_157c</name>
</gene>
<comment type="function">
    <text evidence="1">Forms the portal vertex of the capsid. This portal plays critical roles in head assembly, genome packaging, neck/tail attachment, and genome ejection. The portal protein multimerizes as a single ring-shaped homododecamer arranged around a central channel. Binds to the terminase subunits to form the packaging machine.</text>
</comment>
<comment type="subunit">
    <text evidence="1">Homododecamer. Interacts with the large terminase subunit. Interacts with the major capsid protein. Interacts with the capsid vertex protein.</text>
</comment>
<comment type="subcellular location">
    <subcellularLocation>
        <location evidence="1">Virion</location>
    </subcellularLocation>
    <text evidence="1">Located at a unique 5-fold vertex of the icosahedral capsid.</text>
</comment>
<comment type="similarity">
    <text evidence="1 3">Belongs to the Tevenvirinae portal protein family.</text>
</comment>
<sequence>MAGYGRGFFGLFGGGGLVNAKVDTDKLAQKQDERLLTKATVVALDDAQDGSIILQGGANTYNYVGVESELLSVKTVVEEYQSMAQQPEIRKAVDIIVNDVVTCEEDETPVTVNLDKVEGISDTVKESITECFKEVMHLMDFDNTAYQKIRKWYVDGRQAYHVIVDPTNKKGGIKKLVMLDSRCIRPVYIVEKAMREGGIEAIESVTLKYYYNPNYNRNQFTGQSGTSQNFQPSQQELVFDDESIVYIDSGEEPLANGIVPGLLNPAIRPLNNLVTTEDATVIYAITRAPEKRAFYLDVGTLGKKSAEEYMTMMMGKFKNRNAYDRTTGKITGNAHLMGIAEDYWLPRREGQNATEIATVGGGNQLGEMDHVNYFREKLYDALMIPKSRLQEEGSINIGGSNLAEITQEELRFSKFCAGLRRRYSHFFMEFLRRQLILKGVTDEKDWNEKIKPFIKFEFTSDSYIREQQENAILNDRLASLNTVEPFVGSIFSIDYVMRNVLRMSDEEVKEQQAKIAEEKKKGLYPKVQADETGNYSGSDVSPLKFKPETLPFSGSTDDSI</sequence>
<name>PORTL_BPSAV</name>
<keyword id="KW-0167">Capsid protein</keyword>
<keyword id="KW-0426">Late protein</keyword>
<keyword id="KW-1185">Reference proteome</keyword>
<keyword id="KW-0118">Viral capsid assembly</keyword>
<keyword id="KW-1242">Viral contractile tail ejection system</keyword>
<keyword id="KW-1171">Viral genome ejection through host cell envelope</keyword>
<keyword id="KW-0231">Viral genome packaging</keyword>
<keyword id="KW-1162">Viral penetration into host cytoplasm</keyword>
<keyword id="KW-1188">Viral release from host cell</keyword>
<keyword id="KW-0946">Virion</keyword>
<keyword id="KW-1160">Virus entry into host cell</keyword>
<evidence type="ECO:0000255" key="1">
    <source>
        <dbReference type="HAMAP-Rule" id="MF_04114"/>
    </source>
</evidence>
<evidence type="ECO:0000256" key="2">
    <source>
        <dbReference type="SAM" id="MobiDB-lite"/>
    </source>
</evidence>
<evidence type="ECO:0000305" key="3"/>
<evidence type="ECO:0000312" key="4">
    <source>
        <dbReference type="EMBL" id="CBW38025.1"/>
    </source>
</evidence>
<evidence type="ECO:0000312" key="5">
    <source>
        <dbReference type="Proteomes" id="UP000000339"/>
    </source>
</evidence>
<accession>E1XTG6</accession>
<dbReference type="EMBL" id="FQ312032">
    <property type="protein sequence ID" value="CBW38025.1"/>
    <property type="molecule type" value="Genomic_DNA"/>
</dbReference>
<dbReference type="SMR" id="E1XTG6"/>
<dbReference type="Proteomes" id="UP000000339">
    <property type="component" value="Segment"/>
</dbReference>
<dbReference type="GO" id="GO:0019028">
    <property type="term" value="C:viral capsid"/>
    <property type="evidence" value="ECO:0007669"/>
    <property type="project" value="UniProtKB-UniRule"/>
</dbReference>
<dbReference type="GO" id="GO:0099000">
    <property type="term" value="P:symbiont genome ejection through host cell envelope, contractile tail mechanism"/>
    <property type="evidence" value="ECO:0007669"/>
    <property type="project" value="UniProtKB-UniRule"/>
</dbReference>
<dbReference type="GO" id="GO:0019072">
    <property type="term" value="P:viral genome packaging"/>
    <property type="evidence" value="ECO:0007669"/>
    <property type="project" value="UniProtKB-UniRule"/>
</dbReference>
<dbReference type="GO" id="GO:0019076">
    <property type="term" value="P:viral release from host cell"/>
    <property type="evidence" value="ECO:0007669"/>
    <property type="project" value="UniProtKB-UniRule"/>
</dbReference>
<dbReference type="HAMAP" id="MF_04114">
    <property type="entry name" value="PORTAL_T4"/>
    <property type="match status" value="1"/>
</dbReference>
<dbReference type="InterPro" id="IPR010823">
    <property type="entry name" value="Portal_Gp20"/>
</dbReference>
<dbReference type="Pfam" id="PF07230">
    <property type="entry name" value="Portal_T4"/>
    <property type="match status" value="1"/>
</dbReference>